<feature type="chain" id="PRO_0000335282" description="5'-nucleotidase SurE">
    <location>
        <begin position="1"/>
        <end position="249"/>
    </location>
</feature>
<feature type="binding site" evidence="1">
    <location>
        <position position="9"/>
    </location>
    <ligand>
        <name>a divalent metal cation</name>
        <dbReference type="ChEBI" id="CHEBI:60240"/>
    </ligand>
</feature>
<feature type="binding site" evidence="1">
    <location>
        <position position="10"/>
    </location>
    <ligand>
        <name>a divalent metal cation</name>
        <dbReference type="ChEBI" id="CHEBI:60240"/>
    </ligand>
</feature>
<feature type="binding site" evidence="1">
    <location>
        <position position="40"/>
    </location>
    <ligand>
        <name>a divalent metal cation</name>
        <dbReference type="ChEBI" id="CHEBI:60240"/>
    </ligand>
</feature>
<feature type="binding site" evidence="1">
    <location>
        <position position="92"/>
    </location>
    <ligand>
        <name>a divalent metal cation</name>
        <dbReference type="ChEBI" id="CHEBI:60240"/>
    </ligand>
</feature>
<protein>
    <recommendedName>
        <fullName evidence="1">5'-nucleotidase SurE</fullName>
        <ecNumber evidence="1">3.1.3.5</ecNumber>
    </recommendedName>
    <alternativeName>
        <fullName evidence="1">Nucleoside 5'-monophosphate phosphohydrolase</fullName>
    </alternativeName>
</protein>
<sequence length="249" mass="26780">MIRILVSNDDGVNAPGIKALTEALVEIANVMTVAPDRNCSGASNSLTLTNPLRINRLDNGYISVHGTPTDCVHLAIRELCDGEPDMVVSGINAGANMGDDTLYSGTVAAAMEGRFLGFPAVAISLNGREFKHYQSAAVYARRIVQGLLLHPLASDQILNINVPDLPLDEIKGIRVTRLGARHKAEGIVRTKDPAGREIFWLGPPGLEQDATEGTDFHAVANGYVSITPLTVDLTAYRQLSVLQNWVDKI</sequence>
<accession>A1RHF8</accession>
<keyword id="KW-0963">Cytoplasm</keyword>
<keyword id="KW-0378">Hydrolase</keyword>
<keyword id="KW-0479">Metal-binding</keyword>
<keyword id="KW-0547">Nucleotide-binding</keyword>
<reference key="1">
    <citation type="submission" date="2006-12" db="EMBL/GenBank/DDBJ databases">
        <title>Complete sequence of Shewanella sp. W3-18-1.</title>
        <authorList>
            <consortium name="US DOE Joint Genome Institute"/>
            <person name="Copeland A."/>
            <person name="Lucas S."/>
            <person name="Lapidus A."/>
            <person name="Barry K."/>
            <person name="Detter J.C."/>
            <person name="Glavina del Rio T."/>
            <person name="Hammon N."/>
            <person name="Israni S."/>
            <person name="Dalin E."/>
            <person name="Tice H."/>
            <person name="Pitluck S."/>
            <person name="Chain P."/>
            <person name="Malfatti S."/>
            <person name="Shin M."/>
            <person name="Vergez L."/>
            <person name="Schmutz J."/>
            <person name="Larimer F."/>
            <person name="Land M."/>
            <person name="Hauser L."/>
            <person name="Kyrpides N."/>
            <person name="Lykidis A."/>
            <person name="Tiedje J."/>
            <person name="Richardson P."/>
        </authorList>
    </citation>
    <scope>NUCLEOTIDE SEQUENCE [LARGE SCALE GENOMIC DNA]</scope>
    <source>
        <strain>W3-18-1</strain>
    </source>
</reference>
<name>SURE_SHESW</name>
<proteinExistence type="inferred from homology"/>
<comment type="function">
    <text evidence="1">Nucleotidase that shows phosphatase activity on nucleoside 5'-monophosphates.</text>
</comment>
<comment type="catalytic activity">
    <reaction evidence="1">
        <text>a ribonucleoside 5'-phosphate + H2O = a ribonucleoside + phosphate</text>
        <dbReference type="Rhea" id="RHEA:12484"/>
        <dbReference type="ChEBI" id="CHEBI:15377"/>
        <dbReference type="ChEBI" id="CHEBI:18254"/>
        <dbReference type="ChEBI" id="CHEBI:43474"/>
        <dbReference type="ChEBI" id="CHEBI:58043"/>
        <dbReference type="EC" id="3.1.3.5"/>
    </reaction>
</comment>
<comment type="cofactor">
    <cofactor evidence="1">
        <name>a divalent metal cation</name>
        <dbReference type="ChEBI" id="CHEBI:60240"/>
    </cofactor>
    <text evidence="1">Binds 1 divalent metal cation per subunit.</text>
</comment>
<comment type="subcellular location">
    <subcellularLocation>
        <location evidence="1">Cytoplasm</location>
    </subcellularLocation>
</comment>
<comment type="similarity">
    <text evidence="1">Belongs to the SurE nucleotidase family.</text>
</comment>
<gene>
    <name evidence="1" type="primary">surE</name>
    <name type="ordered locus">Sputw3181_1260</name>
</gene>
<evidence type="ECO:0000255" key="1">
    <source>
        <dbReference type="HAMAP-Rule" id="MF_00060"/>
    </source>
</evidence>
<organism>
    <name type="scientific">Shewanella sp. (strain W3-18-1)</name>
    <dbReference type="NCBI Taxonomy" id="351745"/>
    <lineage>
        <taxon>Bacteria</taxon>
        <taxon>Pseudomonadati</taxon>
        <taxon>Pseudomonadota</taxon>
        <taxon>Gammaproteobacteria</taxon>
        <taxon>Alteromonadales</taxon>
        <taxon>Shewanellaceae</taxon>
        <taxon>Shewanella</taxon>
    </lineage>
</organism>
<dbReference type="EC" id="3.1.3.5" evidence="1"/>
<dbReference type="EMBL" id="CP000503">
    <property type="protein sequence ID" value="ABM24103.1"/>
    <property type="molecule type" value="Genomic_DNA"/>
</dbReference>
<dbReference type="RefSeq" id="WP_011788610.1">
    <property type="nucleotide sequence ID" value="NC_008750.1"/>
</dbReference>
<dbReference type="SMR" id="A1RHF8"/>
<dbReference type="GeneID" id="67444361"/>
<dbReference type="KEGG" id="shw:Sputw3181_1260"/>
<dbReference type="HOGENOM" id="CLU_045192_1_2_6"/>
<dbReference type="Proteomes" id="UP000002597">
    <property type="component" value="Chromosome"/>
</dbReference>
<dbReference type="GO" id="GO:0005737">
    <property type="term" value="C:cytoplasm"/>
    <property type="evidence" value="ECO:0007669"/>
    <property type="project" value="UniProtKB-SubCell"/>
</dbReference>
<dbReference type="GO" id="GO:0008254">
    <property type="term" value="F:3'-nucleotidase activity"/>
    <property type="evidence" value="ECO:0007669"/>
    <property type="project" value="TreeGrafter"/>
</dbReference>
<dbReference type="GO" id="GO:0008253">
    <property type="term" value="F:5'-nucleotidase activity"/>
    <property type="evidence" value="ECO:0007669"/>
    <property type="project" value="UniProtKB-UniRule"/>
</dbReference>
<dbReference type="GO" id="GO:0004309">
    <property type="term" value="F:exopolyphosphatase activity"/>
    <property type="evidence" value="ECO:0007669"/>
    <property type="project" value="TreeGrafter"/>
</dbReference>
<dbReference type="GO" id="GO:0046872">
    <property type="term" value="F:metal ion binding"/>
    <property type="evidence" value="ECO:0007669"/>
    <property type="project" value="UniProtKB-UniRule"/>
</dbReference>
<dbReference type="GO" id="GO:0000166">
    <property type="term" value="F:nucleotide binding"/>
    <property type="evidence" value="ECO:0007669"/>
    <property type="project" value="UniProtKB-KW"/>
</dbReference>
<dbReference type="FunFam" id="3.40.1210.10:FF:000001">
    <property type="entry name" value="5'/3'-nucleotidase SurE"/>
    <property type="match status" value="1"/>
</dbReference>
<dbReference type="Gene3D" id="3.40.1210.10">
    <property type="entry name" value="Survival protein SurE-like phosphatase/nucleotidase"/>
    <property type="match status" value="1"/>
</dbReference>
<dbReference type="HAMAP" id="MF_00060">
    <property type="entry name" value="SurE"/>
    <property type="match status" value="1"/>
</dbReference>
<dbReference type="InterPro" id="IPR030048">
    <property type="entry name" value="SurE"/>
</dbReference>
<dbReference type="InterPro" id="IPR002828">
    <property type="entry name" value="SurE-like_Pase/nucleotidase"/>
</dbReference>
<dbReference type="InterPro" id="IPR036523">
    <property type="entry name" value="SurE-like_sf"/>
</dbReference>
<dbReference type="NCBIfam" id="NF001489">
    <property type="entry name" value="PRK00346.1-3"/>
    <property type="match status" value="1"/>
</dbReference>
<dbReference type="NCBIfam" id="NF001490">
    <property type="entry name" value="PRK00346.1-4"/>
    <property type="match status" value="1"/>
</dbReference>
<dbReference type="NCBIfam" id="TIGR00087">
    <property type="entry name" value="surE"/>
    <property type="match status" value="1"/>
</dbReference>
<dbReference type="PANTHER" id="PTHR30457">
    <property type="entry name" value="5'-NUCLEOTIDASE SURE"/>
    <property type="match status" value="1"/>
</dbReference>
<dbReference type="PANTHER" id="PTHR30457:SF12">
    <property type="entry name" value="5'_3'-NUCLEOTIDASE SURE"/>
    <property type="match status" value="1"/>
</dbReference>
<dbReference type="Pfam" id="PF01975">
    <property type="entry name" value="SurE"/>
    <property type="match status" value="1"/>
</dbReference>
<dbReference type="SUPFAM" id="SSF64167">
    <property type="entry name" value="SurE-like"/>
    <property type="match status" value="1"/>
</dbReference>